<keyword id="KW-0325">Glycoprotein</keyword>
<keyword id="KW-1185">Reference proteome</keyword>
<keyword id="KW-0964">Secreted</keyword>
<keyword id="KW-0732">Signal</keyword>
<organism>
    <name type="scientific">Dictyostelium discoideum</name>
    <name type="common">Social amoeba</name>
    <dbReference type="NCBI Taxonomy" id="44689"/>
    <lineage>
        <taxon>Eukaryota</taxon>
        <taxon>Amoebozoa</taxon>
        <taxon>Evosea</taxon>
        <taxon>Eumycetozoa</taxon>
        <taxon>Dictyostelia</taxon>
        <taxon>Dictyosteliales</taxon>
        <taxon>Dictyosteliaceae</taxon>
        <taxon>Dictyostelium</taxon>
    </lineage>
</organism>
<comment type="subcellular location">
    <subcellularLocation>
        <location evidence="3">Secreted</location>
    </subcellularLocation>
</comment>
<comment type="sequence caution" evidence="3">
    <conflict type="erroneous gene model prediction">
        <sequence resource="EMBL-CDS" id="EAL62121"/>
    </conflict>
</comment>
<feature type="signal peptide" evidence="1">
    <location>
        <begin position="1"/>
        <end position="19"/>
    </location>
</feature>
<feature type="chain" id="PRO_0000346911" description="Putative uncharacterized protein DDB_G0290521">
    <location>
        <begin position="20"/>
        <end position="430"/>
    </location>
</feature>
<feature type="region of interest" description="Disordered" evidence="2">
    <location>
        <begin position="119"/>
        <end position="408"/>
    </location>
</feature>
<feature type="compositionally biased region" description="Pro residues" evidence="2">
    <location>
        <begin position="124"/>
        <end position="168"/>
    </location>
</feature>
<feature type="compositionally biased region" description="Low complexity" evidence="2">
    <location>
        <begin position="169"/>
        <end position="253"/>
    </location>
</feature>
<feature type="compositionally biased region" description="Low complexity" evidence="2">
    <location>
        <begin position="263"/>
        <end position="285"/>
    </location>
</feature>
<feature type="compositionally biased region" description="Polar residues" evidence="2">
    <location>
        <begin position="286"/>
        <end position="303"/>
    </location>
</feature>
<feature type="compositionally biased region" description="Basic and acidic residues" evidence="2">
    <location>
        <begin position="316"/>
        <end position="325"/>
    </location>
</feature>
<feature type="compositionally biased region" description="Low complexity" evidence="2">
    <location>
        <begin position="326"/>
        <end position="370"/>
    </location>
</feature>
<feature type="glycosylation site" description="N-linked (GlcNAc...) asparagine" evidence="1">
    <location>
        <position position="39"/>
    </location>
</feature>
<feature type="glycosylation site" description="N-linked (GlcNAc...) asparagine" evidence="1">
    <location>
        <position position="312"/>
    </location>
</feature>
<feature type="glycosylation site" description="N-linked (GlcNAc...) asparagine" evidence="1">
    <location>
        <position position="408"/>
    </location>
</feature>
<proteinExistence type="inferred from homology"/>
<name>Y8927_DICDI</name>
<evidence type="ECO:0000255" key="1"/>
<evidence type="ECO:0000256" key="2">
    <source>
        <dbReference type="SAM" id="MobiDB-lite"/>
    </source>
</evidence>
<evidence type="ECO:0000305" key="3"/>
<gene>
    <name type="ORF">DDB_G0290521</name>
</gene>
<protein>
    <recommendedName>
        <fullName>Putative uncharacterized protein DDB_G0290521</fullName>
    </recommendedName>
</protein>
<dbReference type="EMBL" id="AAFI02000164">
    <property type="protein sequence ID" value="EAL62121.1"/>
    <property type="status" value="ALT_SEQ"/>
    <property type="molecule type" value="Genomic_DNA"/>
</dbReference>
<dbReference type="RefSeq" id="XP_635623.1">
    <property type="nucleotide sequence ID" value="XM_630531.1"/>
</dbReference>
<dbReference type="SMR" id="Q54FZ4"/>
<dbReference type="GlyGen" id="Q54FZ4">
    <property type="glycosylation" value="7 sites"/>
</dbReference>
<dbReference type="PaxDb" id="44689-DDB0188927"/>
<dbReference type="EnsemblProtists" id="EAL62121">
    <property type="protein sequence ID" value="EAL62121"/>
    <property type="gene ID" value="DDB_G0290521"/>
</dbReference>
<dbReference type="GeneID" id="8627695"/>
<dbReference type="KEGG" id="ddi:DDB_G0290521"/>
<dbReference type="dictyBase" id="DDB_G0290521"/>
<dbReference type="VEuPathDB" id="AmoebaDB:DDB_G0290521"/>
<dbReference type="InParanoid" id="Q54FZ4"/>
<dbReference type="PRO" id="PR:Q54FZ4"/>
<dbReference type="Proteomes" id="UP000002195">
    <property type="component" value="Chromosome 5"/>
</dbReference>
<dbReference type="GO" id="GO:0005576">
    <property type="term" value="C:extracellular region"/>
    <property type="evidence" value="ECO:0007669"/>
    <property type="project" value="UniProtKB-SubCell"/>
</dbReference>
<dbReference type="PANTHER" id="PTHR46155">
    <property type="entry name" value="BIFUNCTIONAL INHIBITOR/LIPID-TRANSFER PROTEIN/SEED STORAGE 2S ALBUMIN SUPERFAMILY PROTEIN"/>
    <property type="match status" value="1"/>
</dbReference>
<dbReference type="PANTHER" id="PTHR46155:SF1">
    <property type="entry name" value="BIFUNCTIONAL INHIBITOR_LIPID-TRANSFER PROTEIN_SEED STORAGE 2S ALBUMIN SUPERFAMILY PROTEIN"/>
    <property type="match status" value="1"/>
</dbReference>
<accession>Q54FZ4</accession>
<reference key="1">
    <citation type="journal article" date="2005" name="Nature">
        <title>The genome of the social amoeba Dictyostelium discoideum.</title>
        <authorList>
            <person name="Eichinger L."/>
            <person name="Pachebat J.A."/>
            <person name="Gloeckner G."/>
            <person name="Rajandream M.A."/>
            <person name="Sucgang R."/>
            <person name="Berriman M."/>
            <person name="Song J."/>
            <person name="Olsen R."/>
            <person name="Szafranski K."/>
            <person name="Xu Q."/>
            <person name="Tunggal B."/>
            <person name="Kummerfeld S."/>
            <person name="Madera M."/>
            <person name="Konfortov B.A."/>
            <person name="Rivero F."/>
            <person name="Bankier A.T."/>
            <person name="Lehmann R."/>
            <person name="Hamlin N."/>
            <person name="Davies R."/>
            <person name="Gaudet P."/>
            <person name="Fey P."/>
            <person name="Pilcher K."/>
            <person name="Chen G."/>
            <person name="Saunders D."/>
            <person name="Sodergren E.J."/>
            <person name="Davis P."/>
            <person name="Kerhornou A."/>
            <person name="Nie X."/>
            <person name="Hall N."/>
            <person name="Anjard C."/>
            <person name="Hemphill L."/>
            <person name="Bason N."/>
            <person name="Farbrother P."/>
            <person name="Desany B."/>
            <person name="Just E."/>
            <person name="Morio T."/>
            <person name="Rost R."/>
            <person name="Churcher C.M."/>
            <person name="Cooper J."/>
            <person name="Haydock S."/>
            <person name="van Driessche N."/>
            <person name="Cronin A."/>
            <person name="Goodhead I."/>
            <person name="Muzny D.M."/>
            <person name="Mourier T."/>
            <person name="Pain A."/>
            <person name="Lu M."/>
            <person name="Harper D."/>
            <person name="Lindsay R."/>
            <person name="Hauser H."/>
            <person name="James K.D."/>
            <person name="Quiles M."/>
            <person name="Madan Babu M."/>
            <person name="Saito T."/>
            <person name="Buchrieser C."/>
            <person name="Wardroper A."/>
            <person name="Felder M."/>
            <person name="Thangavelu M."/>
            <person name="Johnson D."/>
            <person name="Knights A."/>
            <person name="Loulseged H."/>
            <person name="Mungall K.L."/>
            <person name="Oliver K."/>
            <person name="Price C."/>
            <person name="Quail M.A."/>
            <person name="Urushihara H."/>
            <person name="Hernandez J."/>
            <person name="Rabbinowitsch E."/>
            <person name="Steffen D."/>
            <person name="Sanders M."/>
            <person name="Ma J."/>
            <person name="Kohara Y."/>
            <person name="Sharp S."/>
            <person name="Simmonds M.N."/>
            <person name="Spiegler S."/>
            <person name="Tivey A."/>
            <person name="Sugano S."/>
            <person name="White B."/>
            <person name="Walker D."/>
            <person name="Woodward J.R."/>
            <person name="Winckler T."/>
            <person name="Tanaka Y."/>
            <person name="Shaulsky G."/>
            <person name="Schleicher M."/>
            <person name="Weinstock G.M."/>
            <person name="Rosenthal A."/>
            <person name="Cox E.C."/>
            <person name="Chisholm R.L."/>
            <person name="Gibbs R.A."/>
            <person name="Loomis W.F."/>
            <person name="Platzer M."/>
            <person name="Kay R.R."/>
            <person name="Williams J.G."/>
            <person name="Dear P.H."/>
            <person name="Noegel A.A."/>
            <person name="Barrell B.G."/>
            <person name="Kuspa A."/>
        </authorList>
    </citation>
    <scope>NUCLEOTIDE SEQUENCE [LARGE SCALE GENOMIC DNA]</scope>
    <source>
        <strain>AX4</strain>
    </source>
</reference>
<sequence>MKILLFVVLFFNVLVGIYSIDTTIFTVCLNCKDGGIIKNVTLANRCSYLICKDENVDQQDQLTRSFSVKKRLTNGYIFDVYKNNQCSTRSNAFEMTKALTCNGEWLELNSFIKVKCGELDPNSSPSPSPSPSPSPSPSPSPSPSPSPSPSPSPSPSPSPSPSPSPSPSPSSSLEESQTPSQTPTPTQTPTPTQTQTTTPTQTQTLTPTQTQTPSQTPTPSQTPKPTQTPTQTPTPSQTPSQTPSQTPSQTPSQTPTPTPSQTPTPTQTPSQTPTQTQTPTPTQTPISSRPMSISTEKPSSSEEVIQASSEFNESSSEDKKKDSESKSSQSESPSPSASASESESASESASASTSVSVSASPLPIMDSSSSDSEENVSPTPLHKRGTPPPPFIHHSSSNELLEKNSDGNSSCKNIPKYLLIMVSLFLYFLF</sequence>